<feature type="chain" id="PRO_0000362446" description="ATP synthase subunit a">
    <location>
        <begin position="1"/>
        <end position="273"/>
    </location>
</feature>
<feature type="transmembrane region" description="Helical" evidence="1">
    <location>
        <begin position="42"/>
        <end position="62"/>
    </location>
</feature>
<feature type="transmembrane region" description="Helical" evidence="1">
    <location>
        <begin position="102"/>
        <end position="122"/>
    </location>
</feature>
<feature type="transmembrane region" description="Helical" evidence="1">
    <location>
        <begin position="148"/>
        <end position="168"/>
    </location>
</feature>
<feature type="transmembrane region" description="Helical" evidence="1">
    <location>
        <begin position="213"/>
        <end position="233"/>
    </location>
</feature>
<feature type="transmembrane region" description="Helical" evidence="1">
    <location>
        <begin position="244"/>
        <end position="264"/>
    </location>
</feature>
<dbReference type="EMBL" id="CP000826">
    <property type="protein sequence ID" value="ABV39112.1"/>
    <property type="molecule type" value="Genomic_DNA"/>
</dbReference>
<dbReference type="SMR" id="A8G7M2"/>
<dbReference type="STRING" id="399741.Spro_0002"/>
<dbReference type="KEGG" id="spe:Spro_0002"/>
<dbReference type="eggNOG" id="COG0356">
    <property type="taxonomic scope" value="Bacteria"/>
</dbReference>
<dbReference type="HOGENOM" id="CLU_041018_1_0_6"/>
<dbReference type="OrthoDB" id="9789241at2"/>
<dbReference type="GO" id="GO:0005886">
    <property type="term" value="C:plasma membrane"/>
    <property type="evidence" value="ECO:0007669"/>
    <property type="project" value="UniProtKB-SubCell"/>
</dbReference>
<dbReference type="GO" id="GO:0045259">
    <property type="term" value="C:proton-transporting ATP synthase complex"/>
    <property type="evidence" value="ECO:0007669"/>
    <property type="project" value="UniProtKB-KW"/>
</dbReference>
<dbReference type="GO" id="GO:0046933">
    <property type="term" value="F:proton-transporting ATP synthase activity, rotational mechanism"/>
    <property type="evidence" value="ECO:0007669"/>
    <property type="project" value="UniProtKB-UniRule"/>
</dbReference>
<dbReference type="GO" id="GO:0042777">
    <property type="term" value="P:proton motive force-driven plasma membrane ATP synthesis"/>
    <property type="evidence" value="ECO:0007669"/>
    <property type="project" value="TreeGrafter"/>
</dbReference>
<dbReference type="CDD" id="cd00310">
    <property type="entry name" value="ATP-synt_Fo_a_6"/>
    <property type="match status" value="1"/>
</dbReference>
<dbReference type="FunFam" id="1.20.120.220:FF:000002">
    <property type="entry name" value="ATP synthase subunit a"/>
    <property type="match status" value="1"/>
</dbReference>
<dbReference type="Gene3D" id="1.20.120.220">
    <property type="entry name" value="ATP synthase, F0 complex, subunit A"/>
    <property type="match status" value="1"/>
</dbReference>
<dbReference type="HAMAP" id="MF_01393">
    <property type="entry name" value="ATP_synth_a_bact"/>
    <property type="match status" value="1"/>
</dbReference>
<dbReference type="InterPro" id="IPR045082">
    <property type="entry name" value="ATP_syn_F0_a_bact/chloroplast"/>
</dbReference>
<dbReference type="InterPro" id="IPR000568">
    <property type="entry name" value="ATP_synth_F0_asu"/>
</dbReference>
<dbReference type="InterPro" id="IPR023011">
    <property type="entry name" value="ATP_synth_F0_asu_AS"/>
</dbReference>
<dbReference type="InterPro" id="IPR035908">
    <property type="entry name" value="F0_ATP_A_sf"/>
</dbReference>
<dbReference type="NCBIfam" id="TIGR01131">
    <property type="entry name" value="ATP_synt_6_or_A"/>
    <property type="match status" value="1"/>
</dbReference>
<dbReference type="NCBIfam" id="NF004477">
    <property type="entry name" value="PRK05815.1-1"/>
    <property type="match status" value="1"/>
</dbReference>
<dbReference type="PANTHER" id="PTHR42823">
    <property type="entry name" value="ATP SYNTHASE SUBUNIT A, CHLOROPLASTIC"/>
    <property type="match status" value="1"/>
</dbReference>
<dbReference type="PANTHER" id="PTHR42823:SF3">
    <property type="entry name" value="ATP SYNTHASE SUBUNIT A, CHLOROPLASTIC"/>
    <property type="match status" value="1"/>
</dbReference>
<dbReference type="Pfam" id="PF00119">
    <property type="entry name" value="ATP-synt_A"/>
    <property type="match status" value="1"/>
</dbReference>
<dbReference type="PRINTS" id="PR00123">
    <property type="entry name" value="ATPASEA"/>
</dbReference>
<dbReference type="SUPFAM" id="SSF81336">
    <property type="entry name" value="F1F0 ATP synthase subunit A"/>
    <property type="match status" value="1"/>
</dbReference>
<dbReference type="PROSITE" id="PS00449">
    <property type="entry name" value="ATPASE_A"/>
    <property type="match status" value="1"/>
</dbReference>
<proteinExistence type="inferred from homology"/>
<organism>
    <name type="scientific">Serratia proteamaculans (strain 568)</name>
    <dbReference type="NCBI Taxonomy" id="399741"/>
    <lineage>
        <taxon>Bacteria</taxon>
        <taxon>Pseudomonadati</taxon>
        <taxon>Pseudomonadota</taxon>
        <taxon>Gammaproteobacteria</taxon>
        <taxon>Enterobacterales</taxon>
        <taxon>Yersiniaceae</taxon>
        <taxon>Serratia</taxon>
    </lineage>
</organism>
<sequence>MSASGENGTAKDYISHHLNNLQLDLRTFQLVEPHSGTPTFWTLNIDSLFFSVVLGALFLFIFKKVANTATSGVPGKLQTAVELIMGFVDSSVRDMYHGKSKVIAPLALTVFVWVFLMNMMDLLPIDLLPFIGEHVFGLPALRVVPTADVSITLSMALGVFILILFYSIKMKGVGGFVKELTMQPFNHPLFIPINLILEGVSLLSKPVSLGLRLFGNMYAGELIFILIAGLLPWWSQWLLNVPWAIFHILIITLQAFIFMVLTIVYLSMASEEH</sequence>
<gene>
    <name evidence="1" type="primary">atpB</name>
    <name type="ordered locus">Spro_0002</name>
</gene>
<comment type="function">
    <text evidence="1">Key component of the proton channel; it plays a direct role in the translocation of protons across the membrane.</text>
</comment>
<comment type="subunit">
    <text evidence="1">F-type ATPases have 2 components, CF(1) - the catalytic core - and CF(0) - the membrane proton channel. CF(1) has five subunits: alpha(3), beta(3), gamma(1), delta(1), epsilon(1). CF(0) has three main subunits: a(1), b(2) and c(9-12). The alpha and beta chains form an alternating ring which encloses part of the gamma chain. CF(1) is attached to CF(0) by a central stalk formed by the gamma and epsilon chains, while a peripheral stalk is formed by the delta and b chains.</text>
</comment>
<comment type="subcellular location">
    <subcellularLocation>
        <location evidence="1">Cell inner membrane</location>
        <topology evidence="1">Multi-pass membrane protein</topology>
    </subcellularLocation>
</comment>
<comment type="similarity">
    <text evidence="1">Belongs to the ATPase A chain family.</text>
</comment>
<name>ATP6_SERP5</name>
<protein>
    <recommendedName>
        <fullName evidence="1">ATP synthase subunit a</fullName>
    </recommendedName>
    <alternativeName>
        <fullName evidence="1">ATP synthase F0 sector subunit a</fullName>
    </alternativeName>
    <alternativeName>
        <fullName evidence="1">F-ATPase subunit 6</fullName>
    </alternativeName>
</protein>
<reference key="1">
    <citation type="submission" date="2007-09" db="EMBL/GenBank/DDBJ databases">
        <title>Complete sequence of chromosome of Serratia proteamaculans 568.</title>
        <authorList>
            <consortium name="US DOE Joint Genome Institute"/>
            <person name="Copeland A."/>
            <person name="Lucas S."/>
            <person name="Lapidus A."/>
            <person name="Barry K."/>
            <person name="Glavina del Rio T."/>
            <person name="Dalin E."/>
            <person name="Tice H."/>
            <person name="Pitluck S."/>
            <person name="Chain P."/>
            <person name="Malfatti S."/>
            <person name="Shin M."/>
            <person name="Vergez L."/>
            <person name="Schmutz J."/>
            <person name="Larimer F."/>
            <person name="Land M."/>
            <person name="Hauser L."/>
            <person name="Kyrpides N."/>
            <person name="Kim E."/>
            <person name="Taghavi S."/>
            <person name="Newman L."/>
            <person name="Vangronsveld J."/>
            <person name="van der Lelie D."/>
            <person name="Richardson P."/>
        </authorList>
    </citation>
    <scope>NUCLEOTIDE SEQUENCE [LARGE SCALE GENOMIC DNA]</scope>
    <source>
        <strain>568</strain>
    </source>
</reference>
<evidence type="ECO:0000255" key="1">
    <source>
        <dbReference type="HAMAP-Rule" id="MF_01393"/>
    </source>
</evidence>
<accession>A8G7M2</accession>
<keyword id="KW-0066">ATP synthesis</keyword>
<keyword id="KW-0997">Cell inner membrane</keyword>
<keyword id="KW-1003">Cell membrane</keyword>
<keyword id="KW-0138">CF(0)</keyword>
<keyword id="KW-0375">Hydrogen ion transport</keyword>
<keyword id="KW-0406">Ion transport</keyword>
<keyword id="KW-0472">Membrane</keyword>
<keyword id="KW-0812">Transmembrane</keyword>
<keyword id="KW-1133">Transmembrane helix</keyword>
<keyword id="KW-0813">Transport</keyword>